<evidence type="ECO:0000255" key="1">
    <source>
        <dbReference type="HAMAP-Rule" id="MF_00385"/>
    </source>
</evidence>
<evidence type="ECO:0000256" key="2">
    <source>
        <dbReference type="SAM" id="MobiDB-lite"/>
    </source>
</evidence>
<evidence type="ECO:0000305" key="3"/>
<reference key="1">
    <citation type="submission" date="2006-05" db="EMBL/GenBank/DDBJ databases">
        <title>Complete sequence of chromosome of Silicibacter sp. TM1040.</title>
        <authorList>
            <consortium name="US DOE Joint Genome Institute"/>
            <person name="Copeland A."/>
            <person name="Lucas S."/>
            <person name="Lapidus A."/>
            <person name="Barry K."/>
            <person name="Detter J.C."/>
            <person name="Glavina del Rio T."/>
            <person name="Hammon N."/>
            <person name="Israni S."/>
            <person name="Dalin E."/>
            <person name="Tice H."/>
            <person name="Pitluck S."/>
            <person name="Brettin T."/>
            <person name="Bruce D."/>
            <person name="Han C."/>
            <person name="Tapia R."/>
            <person name="Goodwin L."/>
            <person name="Thompson L.S."/>
            <person name="Gilna P."/>
            <person name="Schmutz J."/>
            <person name="Larimer F."/>
            <person name="Land M."/>
            <person name="Hauser L."/>
            <person name="Kyrpides N."/>
            <person name="Kim E."/>
            <person name="Belas R."/>
            <person name="Moran M.A."/>
            <person name="Buchan A."/>
            <person name="Gonzalez J.M."/>
            <person name="Schell M.A."/>
            <person name="Sun F."/>
            <person name="Richardson P."/>
        </authorList>
    </citation>
    <scope>NUCLEOTIDE SEQUENCE [LARGE SCALE GENOMIC DNA]</scope>
    <source>
        <strain>TM1040</strain>
    </source>
</reference>
<dbReference type="EMBL" id="CP000377">
    <property type="protein sequence ID" value="ABF65339.1"/>
    <property type="molecule type" value="Genomic_DNA"/>
</dbReference>
<dbReference type="RefSeq" id="WP_011539921.1">
    <property type="nucleotide sequence ID" value="NC_008044.1"/>
</dbReference>
<dbReference type="SMR" id="Q1GDC7"/>
<dbReference type="STRING" id="292414.TM1040_2607"/>
<dbReference type="KEGG" id="sit:TM1040_2607"/>
<dbReference type="eggNOG" id="COG0228">
    <property type="taxonomic scope" value="Bacteria"/>
</dbReference>
<dbReference type="HOGENOM" id="CLU_100590_3_1_5"/>
<dbReference type="OrthoDB" id="9807878at2"/>
<dbReference type="Proteomes" id="UP000000636">
    <property type="component" value="Chromosome"/>
</dbReference>
<dbReference type="GO" id="GO:0005737">
    <property type="term" value="C:cytoplasm"/>
    <property type="evidence" value="ECO:0007669"/>
    <property type="project" value="UniProtKB-ARBA"/>
</dbReference>
<dbReference type="GO" id="GO:0015935">
    <property type="term" value="C:small ribosomal subunit"/>
    <property type="evidence" value="ECO:0007669"/>
    <property type="project" value="TreeGrafter"/>
</dbReference>
<dbReference type="GO" id="GO:0003735">
    <property type="term" value="F:structural constituent of ribosome"/>
    <property type="evidence" value="ECO:0007669"/>
    <property type="project" value="InterPro"/>
</dbReference>
<dbReference type="GO" id="GO:0006412">
    <property type="term" value="P:translation"/>
    <property type="evidence" value="ECO:0007669"/>
    <property type="project" value="UniProtKB-UniRule"/>
</dbReference>
<dbReference type="Gene3D" id="3.30.1320.10">
    <property type="match status" value="1"/>
</dbReference>
<dbReference type="HAMAP" id="MF_00385">
    <property type="entry name" value="Ribosomal_bS16"/>
    <property type="match status" value="1"/>
</dbReference>
<dbReference type="InterPro" id="IPR000307">
    <property type="entry name" value="Ribosomal_bS16"/>
</dbReference>
<dbReference type="InterPro" id="IPR023803">
    <property type="entry name" value="Ribosomal_bS16_dom_sf"/>
</dbReference>
<dbReference type="NCBIfam" id="TIGR00002">
    <property type="entry name" value="S16"/>
    <property type="match status" value="1"/>
</dbReference>
<dbReference type="PANTHER" id="PTHR12919">
    <property type="entry name" value="30S RIBOSOMAL PROTEIN S16"/>
    <property type="match status" value="1"/>
</dbReference>
<dbReference type="PANTHER" id="PTHR12919:SF20">
    <property type="entry name" value="SMALL RIBOSOMAL SUBUNIT PROTEIN BS16M"/>
    <property type="match status" value="1"/>
</dbReference>
<dbReference type="Pfam" id="PF00886">
    <property type="entry name" value="Ribosomal_S16"/>
    <property type="match status" value="1"/>
</dbReference>
<dbReference type="SUPFAM" id="SSF54565">
    <property type="entry name" value="Ribosomal protein S16"/>
    <property type="match status" value="1"/>
</dbReference>
<comment type="similarity">
    <text evidence="1">Belongs to the bacterial ribosomal protein bS16 family.</text>
</comment>
<accession>Q1GDC7</accession>
<gene>
    <name evidence="1" type="primary">rpsP</name>
    <name type="ordered locus">TM1040_2607</name>
</gene>
<feature type="chain" id="PRO_1000049353" description="Small ribosomal subunit protein bS16">
    <location>
        <begin position="1"/>
        <end position="121"/>
    </location>
</feature>
<feature type="region of interest" description="Disordered" evidence="2">
    <location>
        <begin position="80"/>
        <end position="121"/>
    </location>
</feature>
<feature type="compositionally biased region" description="Basic and acidic residues" evidence="2">
    <location>
        <begin position="81"/>
        <end position="90"/>
    </location>
</feature>
<feature type="compositionally biased region" description="Basic and acidic residues" evidence="2">
    <location>
        <begin position="99"/>
        <end position="110"/>
    </location>
</feature>
<organism>
    <name type="scientific">Ruegeria sp. (strain TM1040)</name>
    <name type="common">Silicibacter sp.</name>
    <dbReference type="NCBI Taxonomy" id="292414"/>
    <lineage>
        <taxon>Bacteria</taxon>
        <taxon>Pseudomonadati</taxon>
        <taxon>Pseudomonadota</taxon>
        <taxon>Alphaproteobacteria</taxon>
        <taxon>Rhodobacterales</taxon>
        <taxon>Roseobacteraceae</taxon>
        <taxon>Ruegeria</taxon>
    </lineage>
</organism>
<name>RS16_RUEST</name>
<keyword id="KW-1185">Reference proteome</keyword>
<keyword id="KW-0687">Ribonucleoprotein</keyword>
<keyword id="KW-0689">Ribosomal protein</keyword>
<sequence length="121" mass="13537">MAMKIRLARGGSKKRPFYRIVAADSRMPRDGRFIEKLGTYNPLLPKDSEERVKMDIEKIQAWLDKGAQPTDRVARMLEAAGVREKTERNNPNKAKPGKKAQERAEEKAAKAAEAAEAADAE</sequence>
<proteinExistence type="inferred from homology"/>
<protein>
    <recommendedName>
        <fullName evidence="1">Small ribosomal subunit protein bS16</fullName>
    </recommendedName>
    <alternativeName>
        <fullName evidence="3">30S ribosomal protein S16</fullName>
    </alternativeName>
</protein>